<comment type="function">
    <text evidence="1">One of the primary rRNA binding proteins. Required for association of the 30S and 50S subunits to form the 70S ribosome, for tRNA binding and peptide bond formation. It has been suggested to have peptidyltransferase activity; this is somewhat controversial. Makes several contacts with the 16S rRNA in the 70S ribosome.</text>
</comment>
<comment type="subunit">
    <text evidence="1">Part of the 50S ribosomal subunit. Forms a bridge to the 30S subunit in the 70S ribosome.</text>
</comment>
<comment type="similarity">
    <text evidence="1">Belongs to the universal ribosomal protein uL2 family.</text>
</comment>
<protein>
    <recommendedName>
        <fullName evidence="1">Large ribosomal subunit protein uL2</fullName>
    </recommendedName>
    <alternativeName>
        <fullName evidence="3">50S ribosomal protein L2</fullName>
    </alternativeName>
</protein>
<feature type="chain" id="PRO_1000165744" description="Large ribosomal subunit protein uL2">
    <location>
        <begin position="1"/>
        <end position="276"/>
    </location>
</feature>
<feature type="region of interest" description="Disordered" evidence="2">
    <location>
        <begin position="225"/>
        <end position="276"/>
    </location>
</feature>
<feature type="compositionally biased region" description="Basic residues" evidence="2">
    <location>
        <begin position="257"/>
        <end position="276"/>
    </location>
</feature>
<evidence type="ECO:0000255" key="1">
    <source>
        <dbReference type="HAMAP-Rule" id="MF_01320"/>
    </source>
</evidence>
<evidence type="ECO:0000256" key="2">
    <source>
        <dbReference type="SAM" id="MobiDB-lite"/>
    </source>
</evidence>
<evidence type="ECO:0000305" key="3"/>
<gene>
    <name evidence="1" type="primary">rplB</name>
    <name type="ordered locus">Dhaf_0425</name>
</gene>
<keyword id="KW-0687">Ribonucleoprotein</keyword>
<keyword id="KW-0689">Ribosomal protein</keyword>
<keyword id="KW-0694">RNA-binding</keyword>
<keyword id="KW-0699">rRNA-binding</keyword>
<organism>
    <name type="scientific">Desulfitobacterium hafniense (strain DSM 10664 / DCB-2)</name>
    <dbReference type="NCBI Taxonomy" id="272564"/>
    <lineage>
        <taxon>Bacteria</taxon>
        <taxon>Bacillati</taxon>
        <taxon>Bacillota</taxon>
        <taxon>Clostridia</taxon>
        <taxon>Eubacteriales</taxon>
        <taxon>Desulfitobacteriaceae</taxon>
        <taxon>Desulfitobacterium</taxon>
    </lineage>
</organism>
<accession>B8G1W9</accession>
<sequence length="276" mass="30137">MPVKGFKPYSPGRRQMTVSTFEEITKTTPERSLLAPLKSKAGRNNQGKLTVRHQGGGHKRKYRLIDFKRNKDSVPAKVASIEYDPNRSANIALLHYLDGHKAYILAPNGLQVGQMVVSGPDADIKVGNALPIKNIPVGTLLHNIEMKPGKGAQLVRSAGGSAQLMAKEGKYATLRLPSGEMRMVHIDCRATIGQVGNLEHENINIGKAGRSRWLGIRPTVRGAVMNPNDHPHGGGEGRNPIGRNPVTPWGKPALGAKTRKKKNPSNRFIVKRRGKK</sequence>
<proteinExistence type="inferred from homology"/>
<name>RL2_DESHD</name>
<reference key="1">
    <citation type="journal article" date="2012" name="BMC Microbiol.">
        <title>Genome sequence of Desulfitobacterium hafniense DCB-2, a Gram-positive anaerobe capable of dehalogenation and metal reduction.</title>
        <authorList>
            <person name="Kim S.H."/>
            <person name="Harzman C."/>
            <person name="Davis J.K."/>
            <person name="Hutcheson R."/>
            <person name="Broderick J.B."/>
            <person name="Marsh T.L."/>
            <person name="Tiedje J.M."/>
        </authorList>
    </citation>
    <scope>NUCLEOTIDE SEQUENCE [LARGE SCALE GENOMIC DNA]</scope>
    <source>
        <strain>DSM 10664 / DCB-2</strain>
    </source>
</reference>
<dbReference type="EMBL" id="CP001336">
    <property type="protein sequence ID" value="ACL18492.1"/>
    <property type="molecule type" value="Genomic_DNA"/>
</dbReference>
<dbReference type="RefSeq" id="WP_015942756.1">
    <property type="nucleotide sequence ID" value="NC_011830.1"/>
</dbReference>
<dbReference type="SMR" id="B8G1W9"/>
<dbReference type="KEGG" id="dhd:Dhaf_0425"/>
<dbReference type="HOGENOM" id="CLU_036235_2_1_9"/>
<dbReference type="Proteomes" id="UP000007726">
    <property type="component" value="Chromosome"/>
</dbReference>
<dbReference type="GO" id="GO:0015934">
    <property type="term" value="C:large ribosomal subunit"/>
    <property type="evidence" value="ECO:0007669"/>
    <property type="project" value="InterPro"/>
</dbReference>
<dbReference type="GO" id="GO:0019843">
    <property type="term" value="F:rRNA binding"/>
    <property type="evidence" value="ECO:0007669"/>
    <property type="project" value="UniProtKB-UniRule"/>
</dbReference>
<dbReference type="GO" id="GO:0003735">
    <property type="term" value="F:structural constituent of ribosome"/>
    <property type="evidence" value="ECO:0007669"/>
    <property type="project" value="InterPro"/>
</dbReference>
<dbReference type="GO" id="GO:0016740">
    <property type="term" value="F:transferase activity"/>
    <property type="evidence" value="ECO:0007669"/>
    <property type="project" value="InterPro"/>
</dbReference>
<dbReference type="GO" id="GO:0002181">
    <property type="term" value="P:cytoplasmic translation"/>
    <property type="evidence" value="ECO:0007669"/>
    <property type="project" value="TreeGrafter"/>
</dbReference>
<dbReference type="FunFam" id="2.30.30.30:FF:000001">
    <property type="entry name" value="50S ribosomal protein L2"/>
    <property type="match status" value="1"/>
</dbReference>
<dbReference type="FunFam" id="2.40.50.140:FF:000003">
    <property type="entry name" value="50S ribosomal protein L2"/>
    <property type="match status" value="1"/>
</dbReference>
<dbReference type="FunFam" id="4.10.950.10:FF:000001">
    <property type="entry name" value="50S ribosomal protein L2"/>
    <property type="match status" value="1"/>
</dbReference>
<dbReference type="Gene3D" id="2.30.30.30">
    <property type="match status" value="1"/>
</dbReference>
<dbReference type="Gene3D" id="2.40.50.140">
    <property type="entry name" value="Nucleic acid-binding proteins"/>
    <property type="match status" value="1"/>
</dbReference>
<dbReference type="Gene3D" id="4.10.950.10">
    <property type="entry name" value="Ribosomal protein L2, domain 3"/>
    <property type="match status" value="1"/>
</dbReference>
<dbReference type="HAMAP" id="MF_01320_B">
    <property type="entry name" value="Ribosomal_uL2_B"/>
    <property type="match status" value="1"/>
</dbReference>
<dbReference type="InterPro" id="IPR012340">
    <property type="entry name" value="NA-bd_OB-fold"/>
</dbReference>
<dbReference type="InterPro" id="IPR014722">
    <property type="entry name" value="Rib_uL2_dom2"/>
</dbReference>
<dbReference type="InterPro" id="IPR002171">
    <property type="entry name" value="Ribosomal_uL2"/>
</dbReference>
<dbReference type="InterPro" id="IPR005880">
    <property type="entry name" value="Ribosomal_uL2_bac/org-type"/>
</dbReference>
<dbReference type="InterPro" id="IPR022669">
    <property type="entry name" value="Ribosomal_uL2_C"/>
</dbReference>
<dbReference type="InterPro" id="IPR022671">
    <property type="entry name" value="Ribosomal_uL2_CS"/>
</dbReference>
<dbReference type="InterPro" id="IPR014726">
    <property type="entry name" value="Ribosomal_uL2_dom3"/>
</dbReference>
<dbReference type="InterPro" id="IPR022666">
    <property type="entry name" value="Ribosomal_uL2_RNA-bd_dom"/>
</dbReference>
<dbReference type="InterPro" id="IPR008991">
    <property type="entry name" value="Translation_prot_SH3-like_sf"/>
</dbReference>
<dbReference type="NCBIfam" id="TIGR01171">
    <property type="entry name" value="rplB_bact"/>
    <property type="match status" value="1"/>
</dbReference>
<dbReference type="PANTHER" id="PTHR13691:SF5">
    <property type="entry name" value="LARGE RIBOSOMAL SUBUNIT PROTEIN UL2M"/>
    <property type="match status" value="1"/>
</dbReference>
<dbReference type="PANTHER" id="PTHR13691">
    <property type="entry name" value="RIBOSOMAL PROTEIN L2"/>
    <property type="match status" value="1"/>
</dbReference>
<dbReference type="Pfam" id="PF00181">
    <property type="entry name" value="Ribosomal_L2"/>
    <property type="match status" value="1"/>
</dbReference>
<dbReference type="Pfam" id="PF03947">
    <property type="entry name" value="Ribosomal_L2_C"/>
    <property type="match status" value="1"/>
</dbReference>
<dbReference type="PIRSF" id="PIRSF002158">
    <property type="entry name" value="Ribosomal_L2"/>
    <property type="match status" value="1"/>
</dbReference>
<dbReference type="SMART" id="SM01383">
    <property type="entry name" value="Ribosomal_L2"/>
    <property type="match status" value="1"/>
</dbReference>
<dbReference type="SMART" id="SM01382">
    <property type="entry name" value="Ribosomal_L2_C"/>
    <property type="match status" value="1"/>
</dbReference>
<dbReference type="SUPFAM" id="SSF50249">
    <property type="entry name" value="Nucleic acid-binding proteins"/>
    <property type="match status" value="1"/>
</dbReference>
<dbReference type="SUPFAM" id="SSF50104">
    <property type="entry name" value="Translation proteins SH3-like domain"/>
    <property type="match status" value="1"/>
</dbReference>
<dbReference type="PROSITE" id="PS00467">
    <property type="entry name" value="RIBOSOMAL_L2"/>
    <property type="match status" value="1"/>
</dbReference>